<keyword id="KW-0025">Alternative splicing</keyword>
<keyword id="KW-0238">DNA-binding</keyword>
<keyword id="KW-0479">Metal-binding</keyword>
<keyword id="KW-0539">Nucleus</keyword>
<keyword id="KW-0675">Receptor</keyword>
<keyword id="KW-0804">Transcription</keyword>
<keyword id="KW-0805">Transcription regulation</keyword>
<keyword id="KW-0862">Zinc</keyword>
<keyword id="KW-0863">Zinc-finger</keyword>
<comment type="function">
    <text>Nuclear hormone receptor that can act as a repressor or activator of transcription. High affinity receptor for thyroid hormones, including triiodothyronine and thyroxine.</text>
</comment>
<comment type="subcellular location">
    <subcellularLocation>
        <location>Nucleus</location>
    </subcellularLocation>
</comment>
<comment type="alternative products">
    <event type="alternative splicing"/>
    <isoform>
        <id>Q91279-1</id>
        <name>Beta-1</name>
        <sequence type="displayed"/>
    </isoform>
    <isoform>
        <id>Q91279-2</id>
        <name>Beta-2</name>
        <sequence type="not described"/>
    </isoform>
</comment>
<comment type="domain">
    <text>Composed of three domains: a modulating N-terminal domain, a DNA-binding domain and a C-terminal ligand-binding domain.</text>
</comment>
<comment type="similarity">
    <text evidence="4">Belongs to the nuclear hormone receptor family. NR1 subfamily.</text>
</comment>
<feature type="chain" id="PRO_0000053456" description="Thyroid hormone receptor beta">
    <location>
        <begin position="1"/>
        <end position="395"/>
    </location>
</feature>
<feature type="domain" description="NR LBD" evidence="3">
    <location>
        <begin position="142"/>
        <end position="395"/>
    </location>
</feature>
<feature type="DNA-binding region" description="Nuclear receptor" evidence="2">
    <location>
        <begin position="32"/>
        <end position="99"/>
    </location>
</feature>
<feature type="zinc finger region" description="NR C4-type" evidence="2">
    <location>
        <begin position="32"/>
        <end position="52"/>
    </location>
</feature>
<feature type="zinc finger region" description="NR C4-type" evidence="2">
    <location>
        <begin position="70"/>
        <end position="94"/>
    </location>
</feature>
<feature type="region of interest" description="Modulating">
    <location>
        <begin position="1"/>
        <end position="31"/>
    </location>
</feature>
<feature type="binding site" evidence="1">
    <location>
        <position position="32"/>
    </location>
    <ligand>
        <name>Zn(2+)</name>
        <dbReference type="ChEBI" id="CHEBI:29105"/>
        <label>1</label>
    </ligand>
</feature>
<feature type="binding site" evidence="1">
    <location>
        <position position="35"/>
    </location>
    <ligand>
        <name>Zn(2+)</name>
        <dbReference type="ChEBI" id="CHEBI:29105"/>
        <label>1</label>
    </ligand>
</feature>
<feature type="binding site" evidence="1">
    <location>
        <position position="49"/>
    </location>
    <ligand>
        <name>Zn(2+)</name>
        <dbReference type="ChEBI" id="CHEBI:29105"/>
        <label>1</label>
    </ligand>
</feature>
<feature type="binding site" evidence="1">
    <location>
        <position position="52"/>
    </location>
    <ligand>
        <name>Zn(2+)</name>
        <dbReference type="ChEBI" id="CHEBI:29105"/>
        <label>1</label>
    </ligand>
</feature>
<feature type="binding site" evidence="1">
    <location>
        <position position="70"/>
    </location>
    <ligand>
        <name>Zn(2+)</name>
        <dbReference type="ChEBI" id="CHEBI:29105"/>
        <label>2</label>
    </ligand>
</feature>
<feature type="binding site" evidence="1">
    <location>
        <position position="76"/>
    </location>
    <ligand>
        <name>Zn(2+)</name>
        <dbReference type="ChEBI" id="CHEBI:29105"/>
        <label>2</label>
    </ligand>
</feature>
<feature type="binding site" evidence="1">
    <location>
        <position position="86"/>
    </location>
    <ligand>
        <name>Zn(2+)</name>
        <dbReference type="ChEBI" id="CHEBI:29105"/>
        <label>2</label>
    </ligand>
</feature>
<feature type="binding site" evidence="1">
    <location>
        <position position="89"/>
    </location>
    <ligand>
        <name>Zn(2+)</name>
        <dbReference type="ChEBI" id="CHEBI:29105"/>
        <label>2</label>
    </ligand>
</feature>
<feature type="binding site" evidence="1">
    <location>
        <position position="216"/>
    </location>
    <ligand>
        <name>3,3',5-triiodo-L-thyronine</name>
        <dbReference type="ChEBI" id="CHEBI:533015"/>
    </ligand>
</feature>
<feature type="binding site" evidence="1">
    <location>
        <position position="216"/>
    </location>
    <ligand>
        <name>L-thyroxine</name>
        <dbReference type="ChEBI" id="CHEBI:58448"/>
    </ligand>
</feature>
<feature type="binding site" evidence="1">
    <location>
        <position position="265"/>
    </location>
    <ligand>
        <name>3,3',5-triiodo-L-thyronine</name>
        <dbReference type="ChEBI" id="CHEBI:533015"/>
    </ligand>
</feature>
<feature type="binding site" evidence="1">
    <location>
        <position position="265"/>
    </location>
    <ligand>
        <name>L-thyroxine</name>
        <dbReference type="ChEBI" id="CHEBI:58448"/>
    </ligand>
</feature>
<feature type="binding site" evidence="1">
    <location>
        <position position="369"/>
    </location>
    <ligand>
        <name>3,3',5-triiodo-L-thyronine</name>
        <dbReference type="ChEBI" id="CHEBI:533015"/>
        <label>1</label>
    </ligand>
</feature>
<feature type="binding site" evidence="1">
    <location>
        <position position="369"/>
    </location>
    <ligand>
        <name>L-thyroxine</name>
        <dbReference type="ChEBI" id="CHEBI:58448"/>
    </ligand>
</feature>
<proteinExistence type="evidence at transcript level"/>
<accession>Q91279</accession>
<organism>
    <name type="scientific">Paralichthys olivaceus</name>
    <name type="common">Bastard halibut</name>
    <name type="synonym">Hippoglossus olivaceus</name>
    <dbReference type="NCBI Taxonomy" id="8255"/>
    <lineage>
        <taxon>Eukaryota</taxon>
        <taxon>Metazoa</taxon>
        <taxon>Chordata</taxon>
        <taxon>Craniata</taxon>
        <taxon>Vertebrata</taxon>
        <taxon>Euteleostomi</taxon>
        <taxon>Actinopterygii</taxon>
        <taxon>Neopterygii</taxon>
        <taxon>Teleostei</taxon>
        <taxon>Neoteleostei</taxon>
        <taxon>Acanthomorphata</taxon>
        <taxon>Carangaria</taxon>
        <taxon>Pleuronectiformes</taxon>
        <taxon>Pleuronectoidei</taxon>
        <taxon>Paralichthyidae</taxon>
        <taxon>Paralichthys</taxon>
    </lineage>
</organism>
<gene>
    <name type="primary">thrb</name>
    <name type="synonym">nr1a2</name>
</gene>
<evidence type="ECO:0000250" key="1">
    <source>
        <dbReference type="UniProtKB" id="P10828"/>
    </source>
</evidence>
<evidence type="ECO:0000255" key="2">
    <source>
        <dbReference type="PROSITE-ProRule" id="PRU00407"/>
    </source>
</evidence>
<evidence type="ECO:0000255" key="3">
    <source>
        <dbReference type="PROSITE-ProRule" id="PRU01189"/>
    </source>
</evidence>
<evidence type="ECO:0000305" key="4"/>
<dbReference type="EMBL" id="D45245">
    <property type="protein sequence ID" value="BAA08201.1"/>
    <property type="molecule type" value="mRNA"/>
</dbReference>
<dbReference type="SMR" id="Q91279"/>
<dbReference type="GO" id="GO:0090575">
    <property type="term" value="C:RNA polymerase II transcription regulator complex"/>
    <property type="evidence" value="ECO:0007669"/>
    <property type="project" value="TreeGrafter"/>
</dbReference>
<dbReference type="GO" id="GO:0004879">
    <property type="term" value="F:nuclear receptor activity"/>
    <property type="evidence" value="ECO:0000250"/>
    <property type="project" value="UniProtKB"/>
</dbReference>
<dbReference type="GO" id="GO:0000978">
    <property type="term" value="F:RNA polymerase II cis-regulatory region sequence-specific DNA binding"/>
    <property type="evidence" value="ECO:0007669"/>
    <property type="project" value="TreeGrafter"/>
</dbReference>
<dbReference type="GO" id="GO:0070324">
    <property type="term" value="F:thyroid hormone binding"/>
    <property type="evidence" value="ECO:0000250"/>
    <property type="project" value="UniProtKB"/>
</dbReference>
<dbReference type="GO" id="GO:0008270">
    <property type="term" value="F:zinc ion binding"/>
    <property type="evidence" value="ECO:0007669"/>
    <property type="project" value="UniProtKB-KW"/>
</dbReference>
<dbReference type="GO" id="GO:0030154">
    <property type="term" value="P:cell differentiation"/>
    <property type="evidence" value="ECO:0007669"/>
    <property type="project" value="TreeGrafter"/>
</dbReference>
<dbReference type="GO" id="GO:0000122">
    <property type="term" value="P:negative regulation of transcription by RNA polymerase II"/>
    <property type="evidence" value="ECO:0007669"/>
    <property type="project" value="TreeGrafter"/>
</dbReference>
<dbReference type="GO" id="GO:0045944">
    <property type="term" value="P:positive regulation of transcription by RNA polymerase II"/>
    <property type="evidence" value="ECO:0007669"/>
    <property type="project" value="TreeGrafter"/>
</dbReference>
<dbReference type="GO" id="GO:0048384">
    <property type="term" value="P:retinoic acid receptor signaling pathway"/>
    <property type="evidence" value="ECO:0007669"/>
    <property type="project" value="TreeGrafter"/>
</dbReference>
<dbReference type="GO" id="GO:0002154">
    <property type="term" value="P:thyroid hormone receptor signaling pathway"/>
    <property type="evidence" value="ECO:0007669"/>
    <property type="project" value="TreeGrafter"/>
</dbReference>
<dbReference type="CDD" id="cd06961">
    <property type="entry name" value="NR_DBD_TR"/>
    <property type="match status" value="1"/>
</dbReference>
<dbReference type="CDD" id="cd06935">
    <property type="entry name" value="NR_LBD_TR"/>
    <property type="match status" value="1"/>
</dbReference>
<dbReference type="FunFam" id="1.10.565.10:FF:000006">
    <property type="entry name" value="Thyroid hormone receptor beta 2"/>
    <property type="match status" value="1"/>
</dbReference>
<dbReference type="FunFam" id="3.30.50.10:FF:000011">
    <property type="entry name" value="Thyroid hormone receptor beta isoform"/>
    <property type="match status" value="1"/>
</dbReference>
<dbReference type="Gene3D" id="3.30.50.10">
    <property type="entry name" value="Erythroid Transcription Factor GATA-1, subunit A"/>
    <property type="match status" value="1"/>
</dbReference>
<dbReference type="Gene3D" id="1.10.565.10">
    <property type="entry name" value="Retinoid X Receptor"/>
    <property type="match status" value="1"/>
</dbReference>
<dbReference type="InterPro" id="IPR035500">
    <property type="entry name" value="NHR-like_dom_sf"/>
</dbReference>
<dbReference type="InterPro" id="IPR000536">
    <property type="entry name" value="Nucl_hrmn_rcpt_lig-bd"/>
</dbReference>
<dbReference type="InterPro" id="IPR050234">
    <property type="entry name" value="Nuclear_hormone_rcpt_NR1"/>
</dbReference>
<dbReference type="InterPro" id="IPR001723">
    <property type="entry name" value="Nuclear_hrmn_rcpt"/>
</dbReference>
<dbReference type="InterPro" id="IPR001728">
    <property type="entry name" value="ThyrH_rcpt"/>
</dbReference>
<dbReference type="InterPro" id="IPR001628">
    <property type="entry name" value="Znf_hrmn_rcpt"/>
</dbReference>
<dbReference type="InterPro" id="IPR013088">
    <property type="entry name" value="Znf_NHR/GATA"/>
</dbReference>
<dbReference type="PANTHER" id="PTHR24082">
    <property type="entry name" value="NUCLEAR HORMONE RECEPTOR"/>
    <property type="match status" value="1"/>
</dbReference>
<dbReference type="PANTHER" id="PTHR24082:SF210">
    <property type="entry name" value="THYROID HORMONE RECEPTOR BETA"/>
    <property type="match status" value="1"/>
</dbReference>
<dbReference type="Pfam" id="PF00104">
    <property type="entry name" value="Hormone_recep"/>
    <property type="match status" value="1"/>
</dbReference>
<dbReference type="Pfam" id="PF00105">
    <property type="entry name" value="zf-C4"/>
    <property type="match status" value="1"/>
</dbReference>
<dbReference type="PRINTS" id="PR00398">
    <property type="entry name" value="STRDHORMONER"/>
</dbReference>
<dbReference type="PRINTS" id="PR00047">
    <property type="entry name" value="STROIDFINGER"/>
</dbReference>
<dbReference type="PRINTS" id="PR00546">
    <property type="entry name" value="THYROIDHORMR"/>
</dbReference>
<dbReference type="SMART" id="SM00430">
    <property type="entry name" value="HOLI"/>
    <property type="match status" value="1"/>
</dbReference>
<dbReference type="SMART" id="SM00399">
    <property type="entry name" value="ZnF_C4"/>
    <property type="match status" value="1"/>
</dbReference>
<dbReference type="SUPFAM" id="SSF57716">
    <property type="entry name" value="Glucocorticoid receptor-like (DNA-binding domain)"/>
    <property type="match status" value="1"/>
</dbReference>
<dbReference type="SUPFAM" id="SSF48508">
    <property type="entry name" value="Nuclear receptor ligand-binding domain"/>
    <property type="match status" value="1"/>
</dbReference>
<dbReference type="PROSITE" id="PS51843">
    <property type="entry name" value="NR_LBD"/>
    <property type="match status" value="1"/>
</dbReference>
<dbReference type="PROSITE" id="PS00031">
    <property type="entry name" value="NUCLEAR_REC_DBD_1"/>
    <property type="match status" value="1"/>
</dbReference>
<dbReference type="PROSITE" id="PS51030">
    <property type="entry name" value="NUCLEAR_REC_DBD_2"/>
    <property type="match status" value="1"/>
</dbReference>
<reference key="1">
    <citation type="journal article" date="1995" name="Gen. Comp. Endocrinol.">
        <title>cDNA cloning of thyroid hormone receptor beta for the Japanese flounder.</title>
        <authorList>
            <person name="Yamano K."/>
            <person name="Inui Y."/>
        </authorList>
    </citation>
    <scope>NUCLEOTIDE SEQUENCE [MRNA]</scope>
</reference>
<name>THB_PAROL</name>
<sequence>MSEPAENCSPRWKDEAIQNGYIPSYLDKDELCVVCGDKATGYHYRCITCEGCKGFFRRTIQKNLNPTYACKYEGKCVIDKVTRNQCQECRFKKCIAVGMATDLVLDDSKRLAKRKLIEENRERRRKEELQKTVWDRLEPTQEEWDLIRMVTEAHMATNAQGNHWKQKRKFLSAAGVKEDKPEEIGQASMANTPEGNKVDIEAFSQFTKIITPAITRVVDFAKKLPMFCELPCEDQIILLKGCCMEIMSLRAAVRYDPESETLTLNGEMAVTRGQLKNGGLGVVSDAIFDLGVSLSSFNLDDSEVALLQAVILLSSDRPGLSSVERIEPCQEEFLLAFEHYINYRKHKLAHFWPKLLMKVTDLRMIGACHASRFLHMKVECPTELFPPLFLEVFED</sequence>
<protein>
    <recommendedName>
        <fullName>Thyroid hormone receptor beta</fullName>
    </recommendedName>
    <alternativeName>
        <fullName>Nuclear receptor subfamily 1 group A member 2</fullName>
    </alternativeName>
</protein>